<accession>Q7UN13</accession>
<reference key="1">
    <citation type="journal article" date="2003" name="Proc. Natl. Acad. Sci. U.S.A.">
        <title>Complete genome sequence of the marine planctomycete Pirellula sp. strain 1.</title>
        <authorList>
            <person name="Gloeckner F.O."/>
            <person name="Kube M."/>
            <person name="Bauer M."/>
            <person name="Teeling H."/>
            <person name="Lombardot T."/>
            <person name="Ludwig W."/>
            <person name="Gade D."/>
            <person name="Beck A."/>
            <person name="Borzym K."/>
            <person name="Heitmann K."/>
            <person name="Rabus R."/>
            <person name="Schlesner H."/>
            <person name="Amann R."/>
            <person name="Reinhardt R."/>
        </authorList>
    </citation>
    <scope>NUCLEOTIDE SEQUENCE [LARGE SCALE GENOMIC DNA]</scope>
    <source>
        <strain>DSM 10527 / NCIMB 13988 / SH1</strain>
    </source>
</reference>
<keyword id="KW-1185">Reference proteome</keyword>
<keyword id="KW-0687">Ribonucleoprotein</keyword>
<keyword id="KW-0689">Ribosomal protein</keyword>
<keyword id="KW-0694">RNA-binding</keyword>
<keyword id="KW-0699">rRNA-binding</keyword>
<keyword id="KW-0820">tRNA-binding</keyword>
<protein>
    <recommendedName>
        <fullName evidence="1">Large ribosomal subunit protein uL16</fullName>
    </recommendedName>
    <alternativeName>
        <fullName evidence="3">50S ribosomal protein L16</fullName>
    </alternativeName>
</protein>
<evidence type="ECO:0000255" key="1">
    <source>
        <dbReference type="HAMAP-Rule" id="MF_01342"/>
    </source>
</evidence>
<evidence type="ECO:0000256" key="2">
    <source>
        <dbReference type="SAM" id="MobiDB-lite"/>
    </source>
</evidence>
<evidence type="ECO:0000305" key="3"/>
<dbReference type="EMBL" id="BX294146">
    <property type="protein sequence ID" value="CAD75606.1"/>
    <property type="molecule type" value="Genomic_DNA"/>
</dbReference>
<dbReference type="RefSeq" id="NP_868059.1">
    <property type="nucleotide sequence ID" value="NC_005027.1"/>
</dbReference>
<dbReference type="RefSeq" id="WP_011121605.1">
    <property type="nucleotide sequence ID" value="NC_005027.1"/>
</dbReference>
<dbReference type="SMR" id="Q7UN13"/>
<dbReference type="FunCoup" id="Q7UN13">
    <property type="interactions" value="546"/>
</dbReference>
<dbReference type="STRING" id="243090.RB7841"/>
<dbReference type="EnsemblBacteria" id="CAD75606">
    <property type="protein sequence ID" value="CAD75606"/>
    <property type="gene ID" value="RB7841"/>
</dbReference>
<dbReference type="GeneID" id="90608444"/>
<dbReference type="KEGG" id="rba:RB7841"/>
<dbReference type="PATRIC" id="fig|243090.15.peg.3789"/>
<dbReference type="eggNOG" id="COG0197">
    <property type="taxonomic scope" value="Bacteria"/>
</dbReference>
<dbReference type="HOGENOM" id="CLU_078858_2_1_0"/>
<dbReference type="InParanoid" id="Q7UN13"/>
<dbReference type="OrthoDB" id="9802589at2"/>
<dbReference type="Proteomes" id="UP000001025">
    <property type="component" value="Chromosome"/>
</dbReference>
<dbReference type="GO" id="GO:0022625">
    <property type="term" value="C:cytosolic large ribosomal subunit"/>
    <property type="evidence" value="ECO:0000318"/>
    <property type="project" value="GO_Central"/>
</dbReference>
<dbReference type="GO" id="GO:0019843">
    <property type="term" value="F:rRNA binding"/>
    <property type="evidence" value="ECO:0000318"/>
    <property type="project" value="GO_Central"/>
</dbReference>
<dbReference type="GO" id="GO:0003735">
    <property type="term" value="F:structural constituent of ribosome"/>
    <property type="evidence" value="ECO:0000318"/>
    <property type="project" value="GO_Central"/>
</dbReference>
<dbReference type="GO" id="GO:0000049">
    <property type="term" value="F:tRNA binding"/>
    <property type="evidence" value="ECO:0007669"/>
    <property type="project" value="UniProtKB-KW"/>
</dbReference>
<dbReference type="GO" id="GO:0006412">
    <property type="term" value="P:translation"/>
    <property type="evidence" value="ECO:0007669"/>
    <property type="project" value="UniProtKB-UniRule"/>
</dbReference>
<dbReference type="CDD" id="cd01433">
    <property type="entry name" value="Ribosomal_L16_L10e"/>
    <property type="match status" value="1"/>
</dbReference>
<dbReference type="FunFam" id="3.90.1170.10:FF:000001">
    <property type="entry name" value="50S ribosomal protein L16"/>
    <property type="match status" value="1"/>
</dbReference>
<dbReference type="Gene3D" id="3.90.1170.10">
    <property type="entry name" value="Ribosomal protein L10e/L16"/>
    <property type="match status" value="1"/>
</dbReference>
<dbReference type="HAMAP" id="MF_01342">
    <property type="entry name" value="Ribosomal_uL16"/>
    <property type="match status" value="1"/>
</dbReference>
<dbReference type="InterPro" id="IPR047873">
    <property type="entry name" value="Ribosomal_uL16"/>
</dbReference>
<dbReference type="InterPro" id="IPR000114">
    <property type="entry name" value="Ribosomal_uL16_bact-type"/>
</dbReference>
<dbReference type="InterPro" id="IPR020798">
    <property type="entry name" value="Ribosomal_uL16_CS"/>
</dbReference>
<dbReference type="InterPro" id="IPR016180">
    <property type="entry name" value="Ribosomal_uL16_dom"/>
</dbReference>
<dbReference type="InterPro" id="IPR036920">
    <property type="entry name" value="Ribosomal_uL16_sf"/>
</dbReference>
<dbReference type="NCBIfam" id="TIGR01164">
    <property type="entry name" value="rplP_bact"/>
    <property type="match status" value="1"/>
</dbReference>
<dbReference type="PANTHER" id="PTHR12220">
    <property type="entry name" value="50S/60S RIBOSOMAL PROTEIN L16"/>
    <property type="match status" value="1"/>
</dbReference>
<dbReference type="PANTHER" id="PTHR12220:SF13">
    <property type="entry name" value="LARGE RIBOSOMAL SUBUNIT PROTEIN UL16M"/>
    <property type="match status" value="1"/>
</dbReference>
<dbReference type="Pfam" id="PF00252">
    <property type="entry name" value="Ribosomal_L16"/>
    <property type="match status" value="1"/>
</dbReference>
<dbReference type="PRINTS" id="PR00060">
    <property type="entry name" value="RIBOSOMALL16"/>
</dbReference>
<dbReference type="SUPFAM" id="SSF54686">
    <property type="entry name" value="Ribosomal protein L16p/L10e"/>
    <property type="match status" value="1"/>
</dbReference>
<dbReference type="PROSITE" id="PS00701">
    <property type="entry name" value="RIBOSOMAL_L16_2"/>
    <property type="match status" value="1"/>
</dbReference>
<name>RL16_RHOBA</name>
<organism>
    <name type="scientific">Rhodopirellula baltica (strain DSM 10527 / NCIMB 13988 / SH1)</name>
    <dbReference type="NCBI Taxonomy" id="243090"/>
    <lineage>
        <taxon>Bacteria</taxon>
        <taxon>Pseudomonadati</taxon>
        <taxon>Planctomycetota</taxon>
        <taxon>Planctomycetia</taxon>
        <taxon>Pirellulales</taxon>
        <taxon>Pirellulaceae</taxon>
        <taxon>Rhodopirellula</taxon>
    </lineage>
</organism>
<sequence>MALMPKRVKHRKSQRGRIKGNATRGNTVVFGDYGIQSLDAGWIKATTIEAGRIAAQQYVRGQGKLYIRIFPDKSVTSTPLETRMGKGKGEPDFWAAVVKPGTILYELSGVTEQQAKVCFARLASKMPVKVRFVERRSA</sequence>
<feature type="chain" id="PRO_0000062184" description="Large ribosomal subunit protein uL16">
    <location>
        <begin position="1"/>
        <end position="138"/>
    </location>
</feature>
<feature type="region of interest" description="Disordered" evidence="2">
    <location>
        <begin position="1"/>
        <end position="21"/>
    </location>
</feature>
<feature type="compositionally biased region" description="Basic residues" evidence="2">
    <location>
        <begin position="1"/>
        <end position="18"/>
    </location>
</feature>
<comment type="function">
    <text evidence="1">Binds 23S rRNA and is also seen to make contacts with the A and possibly P site tRNAs.</text>
</comment>
<comment type="subunit">
    <text evidence="1">Part of the 50S ribosomal subunit.</text>
</comment>
<comment type="similarity">
    <text evidence="1">Belongs to the universal ribosomal protein uL16 family.</text>
</comment>
<gene>
    <name evidence="1" type="primary">rplP</name>
    <name type="ordered locus">RB7841</name>
</gene>
<proteinExistence type="inferred from homology"/>